<comment type="function">
    <text evidence="1">Catalyzes the anti-1,4-elimination of the C-3 phosphate and the C-6 proR hydrogen from 5-enolpyruvylshikimate-3-phosphate (EPSP) to yield chorismate, which is the branch point compound that serves as the starting substrate for the three terminal pathways of aromatic amino acid biosynthesis. This reaction introduces a second double bond into the aromatic ring system.</text>
</comment>
<comment type="catalytic activity">
    <reaction evidence="1">
        <text>5-O-(1-carboxyvinyl)-3-phosphoshikimate = chorismate + phosphate</text>
        <dbReference type="Rhea" id="RHEA:21020"/>
        <dbReference type="ChEBI" id="CHEBI:29748"/>
        <dbReference type="ChEBI" id="CHEBI:43474"/>
        <dbReference type="ChEBI" id="CHEBI:57701"/>
        <dbReference type="EC" id="4.2.3.5"/>
    </reaction>
</comment>
<comment type="cofactor">
    <cofactor evidence="1">
        <name>FMNH2</name>
        <dbReference type="ChEBI" id="CHEBI:57618"/>
    </cofactor>
    <text evidence="1">Reduced FMN (FMNH(2)).</text>
</comment>
<comment type="pathway">
    <text evidence="1">Metabolic intermediate biosynthesis; chorismate biosynthesis; chorismate from D-erythrose 4-phosphate and phosphoenolpyruvate: step 7/7.</text>
</comment>
<comment type="similarity">
    <text evidence="1">Belongs to the chorismate synthase family.</text>
</comment>
<sequence length="380" mass="41087">MASRDSLGEVFRVSIFGESHGPGVGALVTGVPPGLEVDEAYINRELERRRPGGPYASPRREADRVEILSGVFRGRTTGAPILLFIRNVDVKPGFYEEFRYKPRPGHADYVAYERYLGHQDYRGGGIFSGRRTAALVAAGAIAKLVLARYGVRVYAYVKSIGGVEARVEPRDSEEFRRAIDRDPLKCPDPEASERMRRLVEEARREGDSLGSVVEAVAFNVPPGLGDPPLGGVDALLARAVMAIPAAKAVEFGEGFALAFMRGSEAHDSPRAVGGRIVHETNRSGGIVGGLTNGMPIVFRVAFKPPSSIPKPRRTVDLRSLGEAWVSGKGRHDPVIGPRAAPVVEAVTAIVLADLLLLREALLPEWVEDLRPWTRGEAGGD</sequence>
<organism>
    <name type="scientific">Aeropyrum pernix (strain ATCC 700893 / DSM 11879 / JCM 9820 / NBRC 100138 / K1)</name>
    <dbReference type="NCBI Taxonomy" id="272557"/>
    <lineage>
        <taxon>Archaea</taxon>
        <taxon>Thermoproteota</taxon>
        <taxon>Thermoprotei</taxon>
        <taxon>Desulfurococcales</taxon>
        <taxon>Desulfurococcaceae</taxon>
        <taxon>Aeropyrum</taxon>
    </lineage>
</organism>
<reference key="1">
    <citation type="journal article" date="1999" name="DNA Res.">
        <title>Complete genome sequence of an aerobic hyper-thermophilic crenarchaeon, Aeropyrum pernix K1.</title>
        <authorList>
            <person name="Kawarabayasi Y."/>
            <person name="Hino Y."/>
            <person name="Horikawa H."/>
            <person name="Yamazaki S."/>
            <person name="Haikawa Y."/>
            <person name="Jin-no K."/>
            <person name="Takahashi M."/>
            <person name="Sekine M."/>
            <person name="Baba S."/>
            <person name="Ankai A."/>
            <person name="Kosugi H."/>
            <person name="Hosoyama A."/>
            <person name="Fukui S."/>
            <person name="Nagai Y."/>
            <person name="Nishijima K."/>
            <person name="Nakazawa H."/>
            <person name="Takamiya M."/>
            <person name="Masuda S."/>
            <person name="Funahashi T."/>
            <person name="Tanaka T."/>
            <person name="Kudoh Y."/>
            <person name="Yamazaki J."/>
            <person name="Kushida N."/>
            <person name="Oguchi A."/>
            <person name="Aoki K."/>
            <person name="Kubota K."/>
            <person name="Nakamura Y."/>
            <person name="Nomura N."/>
            <person name="Sako Y."/>
            <person name="Kikuchi H."/>
        </authorList>
    </citation>
    <scope>NUCLEOTIDE SEQUENCE [LARGE SCALE GENOMIC DNA]</scope>
    <source>
        <strain>ATCC 700893 / DSM 11879 / JCM 9820 / NBRC 100138 / K1</strain>
    </source>
</reference>
<feature type="chain" id="PRO_0000140686" description="Chorismate synthase">
    <location>
        <begin position="1"/>
        <end position="380"/>
    </location>
</feature>
<feature type="binding site" evidence="1">
    <location>
        <position position="49"/>
    </location>
    <ligand>
        <name>NADP(+)</name>
        <dbReference type="ChEBI" id="CHEBI:58349"/>
    </ligand>
</feature>
<feature type="binding site" evidence="1">
    <location>
        <position position="288"/>
    </location>
    <ligand>
        <name>FMN</name>
        <dbReference type="ChEBI" id="CHEBI:58210"/>
    </ligand>
</feature>
<feature type="binding site" evidence="1">
    <location>
        <begin position="303"/>
        <end position="307"/>
    </location>
    <ligand>
        <name>FMN</name>
        <dbReference type="ChEBI" id="CHEBI:58210"/>
    </ligand>
</feature>
<feature type="binding site" evidence="1">
    <location>
        <position position="330"/>
    </location>
    <ligand>
        <name>FMN</name>
        <dbReference type="ChEBI" id="CHEBI:58210"/>
    </ligand>
</feature>
<proteinExistence type="inferred from homology"/>
<keyword id="KW-0028">Amino-acid biosynthesis</keyword>
<keyword id="KW-0057">Aromatic amino acid biosynthesis</keyword>
<keyword id="KW-0274">FAD</keyword>
<keyword id="KW-0285">Flavoprotein</keyword>
<keyword id="KW-0288">FMN</keyword>
<keyword id="KW-0456">Lyase</keyword>
<keyword id="KW-0521">NADP</keyword>
<keyword id="KW-1185">Reference proteome</keyword>
<name>AROC_AERPE</name>
<protein>
    <recommendedName>
        <fullName evidence="1">Chorismate synthase</fullName>
        <shortName evidence="1">CS</shortName>
        <ecNumber evidence="1">4.2.3.5</ecNumber>
    </recommendedName>
    <alternativeName>
        <fullName evidence="1">5-enolpyruvylshikimate-3-phosphate phospholyase</fullName>
    </alternativeName>
</protein>
<accession>Q9YEL4</accession>
<gene>
    <name evidence="1" type="primary">aroC</name>
    <name type="ordered locus">APE_0564</name>
</gene>
<dbReference type="EC" id="4.2.3.5" evidence="1"/>
<dbReference type="EMBL" id="BA000002">
    <property type="protein sequence ID" value="BAA79532.1"/>
    <property type="molecule type" value="Genomic_DNA"/>
</dbReference>
<dbReference type="PIR" id="D72641">
    <property type="entry name" value="D72641"/>
</dbReference>
<dbReference type="RefSeq" id="WP_010865838.1">
    <property type="nucleotide sequence ID" value="NC_000854.2"/>
</dbReference>
<dbReference type="SMR" id="Q9YEL4"/>
<dbReference type="STRING" id="272557.APE_0564"/>
<dbReference type="EnsemblBacteria" id="BAA79532">
    <property type="protein sequence ID" value="BAA79532"/>
    <property type="gene ID" value="APE_0564"/>
</dbReference>
<dbReference type="GeneID" id="1444730"/>
<dbReference type="KEGG" id="ape:APE_0564"/>
<dbReference type="PATRIC" id="fig|272557.25.peg.423"/>
<dbReference type="eggNOG" id="arCOG04133">
    <property type="taxonomic scope" value="Archaea"/>
</dbReference>
<dbReference type="UniPathway" id="UPA00053">
    <property type="reaction ID" value="UER00090"/>
</dbReference>
<dbReference type="Proteomes" id="UP000002518">
    <property type="component" value="Chromosome"/>
</dbReference>
<dbReference type="GO" id="GO:0005829">
    <property type="term" value="C:cytosol"/>
    <property type="evidence" value="ECO:0007669"/>
    <property type="project" value="TreeGrafter"/>
</dbReference>
<dbReference type="GO" id="GO:0004107">
    <property type="term" value="F:chorismate synthase activity"/>
    <property type="evidence" value="ECO:0007669"/>
    <property type="project" value="UniProtKB-UniRule"/>
</dbReference>
<dbReference type="GO" id="GO:0010181">
    <property type="term" value="F:FMN binding"/>
    <property type="evidence" value="ECO:0007669"/>
    <property type="project" value="TreeGrafter"/>
</dbReference>
<dbReference type="GO" id="GO:0008652">
    <property type="term" value="P:amino acid biosynthetic process"/>
    <property type="evidence" value="ECO:0007669"/>
    <property type="project" value="UniProtKB-KW"/>
</dbReference>
<dbReference type="GO" id="GO:0009073">
    <property type="term" value="P:aromatic amino acid family biosynthetic process"/>
    <property type="evidence" value="ECO:0007669"/>
    <property type="project" value="UniProtKB-KW"/>
</dbReference>
<dbReference type="GO" id="GO:0009423">
    <property type="term" value="P:chorismate biosynthetic process"/>
    <property type="evidence" value="ECO:0007669"/>
    <property type="project" value="UniProtKB-UniRule"/>
</dbReference>
<dbReference type="CDD" id="cd07304">
    <property type="entry name" value="Chorismate_synthase"/>
    <property type="match status" value="1"/>
</dbReference>
<dbReference type="Gene3D" id="3.60.150.10">
    <property type="entry name" value="Chorismate synthase AroC"/>
    <property type="match status" value="1"/>
</dbReference>
<dbReference type="HAMAP" id="MF_00300">
    <property type="entry name" value="Chorismate_synth"/>
    <property type="match status" value="1"/>
</dbReference>
<dbReference type="InterPro" id="IPR000453">
    <property type="entry name" value="Chorismate_synth"/>
</dbReference>
<dbReference type="InterPro" id="IPR035904">
    <property type="entry name" value="Chorismate_synth_AroC_sf"/>
</dbReference>
<dbReference type="InterPro" id="IPR020541">
    <property type="entry name" value="Chorismate_synthase_CS"/>
</dbReference>
<dbReference type="NCBIfam" id="TIGR00033">
    <property type="entry name" value="aroC"/>
    <property type="match status" value="1"/>
</dbReference>
<dbReference type="NCBIfam" id="NF003793">
    <property type="entry name" value="PRK05382.1"/>
    <property type="match status" value="1"/>
</dbReference>
<dbReference type="PANTHER" id="PTHR21085">
    <property type="entry name" value="CHORISMATE SYNTHASE"/>
    <property type="match status" value="1"/>
</dbReference>
<dbReference type="PANTHER" id="PTHR21085:SF0">
    <property type="entry name" value="CHORISMATE SYNTHASE"/>
    <property type="match status" value="1"/>
</dbReference>
<dbReference type="Pfam" id="PF01264">
    <property type="entry name" value="Chorismate_synt"/>
    <property type="match status" value="1"/>
</dbReference>
<dbReference type="PIRSF" id="PIRSF001456">
    <property type="entry name" value="Chorismate_synth"/>
    <property type="match status" value="1"/>
</dbReference>
<dbReference type="SUPFAM" id="SSF103263">
    <property type="entry name" value="Chorismate synthase, AroC"/>
    <property type="match status" value="1"/>
</dbReference>
<dbReference type="PROSITE" id="PS00787">
    <property type="entry name" value="CHORISMATE_SYNTHASE_1"/>
    <property type="match status" value="1"/>
</dbReference>
<dbReference type="PROSITE" id="PS00788">
    <property type="entry name" value="CHORISMATE_SYNTHASE_2"/>
    <property type="match status" value="1"/>
</dbReference>
<dbReference type="PROSITE" id="PS00789">
    <property type="entry name" value="CHORISMATE_SYNTHASE_3"/>
    <property type="match status" value="1"/>
</dbReference>
<evidence type="ECO:0000255" key="1">
    <source>
        <dbReference type="HAMAP-Rule" id="MF_00300"/>
    </source>
</evidence>